<name>ADEC_LEUMM</name>
<accession>Q03YC9</accession>
<proteinExistence type="inferred from homology"/>
<keyword id="KW-0378">Hydrolase</keyword>
<keyword id="KW-0464">Manganese</keyword>
<keyword id="KW-1185">Reference proteome</keyword>
<organism>
    <name type="scientific">Leuconostoc mesenteroides subsp. mesenteroides (strain ATCC 8293 / DSM 20343 / BCRC 11652 / CCM 1803 / JCM 6124 / NCDO 523 / NBRC 100496 / NCIMB 8023 / NCTC 12954 / NRRL B-1118 / 37Y)</name>
    <dbReference type="NCBI Taxonomy" id="203120"/>
    <lineage>
        <taxon>Bacteria</taxon>
        <taxon>Bacillati</taxon>
        <taxon>Bacillota</taxon>
        <taxon>Bacilli</taxon>
        <taxon>Lactobacillales</taxon>
        <taxon>Lactobacillaceae</taxon>
        <taxon>Leuconostoc</taxon>
    </lineage>
</organism>
<feature type="chain" id="PRO_0000292387" description="Adenine deaminase">
    <location>
        <begin position="1"/>
        <end position="551"/>
    </location>
</feature>
<sequence length="551" mass="60115">MTKLVTWHIKNAKILDVFNLKFDDTELWINDNQILYRGKRSDLTAENTFDAGGGYIVPGLIDSHLHIESSLLTPSEFGKLVIPHGITRIFADPHEIASVAGVSGIQYMLEDAKQTPLNIHYMLPSSVPATPFEHAGATLHADALKPFYSVPEVNGLAEVMDFPAVANLDPDMLQKIKDAEDAGRHVDGHAAGLTPEQLAVYRNVGIDTDHESENAKEALERLNAGFSIFVREGTVERDEKAILPAITMANQSHFSFATDDKTANDIQSEGSIDYSVKLAIENGMDPAIAFTIATYNAAQAHKLQNIGALTDGFVADLAVFDDLAHLETPKVMIGGHWYKDNQSIVTPLANQSLNFSLTKSDIALPLQSDKPAHIINITPHHITTEHTVEEVPVEQGLFVANETFAKIVVAERYHNLGHGVGIIKGFNMRDGAIASTIAHDSHNVIIAGVNDDDMILAADTLHEIGGGQVVVNHGKITTLPLPIGGLMSDQPFENVIKTNQQLLQAFSEISDVPFDPFLTLSFMALPVIPSLKITDQGLFDFEKFDFITVQD</sequence>
<protein>
    <recommendedName>
        <fullName evidence="1">Adenine deaminase</fullName>
        <shortName evidence="1">Adenase</shortName>
        <shortName evidence="1">Adenine aminase</shortName>
        <ecNumber evidence="1">3.5.4.2</ecNumber>
    </recommendedName>
</protein>
<gene>
    <name evidence="1" type="primary">ade</name>
    <name type="ordered locus">LEUM_0683</name>
</gene>
<dbReference type="EC" id="3.5.4.2" evidence="1"/>
<dbReference type="EMBL" id="CP000414">
    <property type="protein sequence ID" value="ABJ61793.1"/>
    <property type="molecule type" value="Genomic_DNA"/>
</dbReference>
<dbReference type="RefSeq" id="WP_011679481.1">
    <property type="nucleotide sequence ID" value="NC_008531.1"/>
</dbReference>
<dbReference type="SMR" id="Q03YC9"/>
<dbReference type="EnsemblBacteria" id="ABJ61793">
    <property type="protein sequence ID" value="ABJ61793"/>
    <property type="gene ID" value="LEUM_0683"/>
</dbReference>
<dbReference type="GeneID" id="29576262"/>
<dbReference type="KEGG" id="lme:LEUM_0683"/>
<dbReference type="eggNOG" id="COG1001">
    <property type="taxonomic scope" value="Bacteria"/>
</dbReference>
<dbReference type="HOGENOM" id="CLU_027935_0_0_9"/>
<dbReference type="Proteomes" id="UP000000362">
    <property type="component" value="Chromosome"/>
</dbReference>
<dbReference type="GO" id="GO:0000034">
    <property type="term" value="F:adenine deaminase activity"/>
    <property type="evidence" value="ECO:0007669"/>
    <property type="project" value="UniProtKB-UniRule"/>
</dbReference>
<dbReference type="GO" id="GO:0006146">
    <property type="term" value="P:adenine catabolic process"/>
    <property type="evidence" value="ECO:0007669"/>
    <property type="project" value="InterPro"/>
</dbReference>
<dbReference type="CDD" id="cd01295">
    <property type="entry name" value="AdeC"/>
    <property type="match status" value="1"/>
</dbReference>
<dbReference type="Gene3D" id="3.20.20.140">
    <property type="entry name" value="Metal-dependent hydrolases"/>
    <property type="match status" value="1"/>
</dbReference>
<dbReference type="Gene3D" id="2.30.40.10">
    <property type="entry name" value="Urease, subunit C, domain 1"/>
    <property type="match status" value="1"/>
</dbReference>
<dbReference type="HAMAP" id="MF_01518">
    <property type="entry name" value="Adenine_deamin"/>
    <property type="match status" value="1"/>
</dbReference>
<dbReference type="InterPro" id="IPR006679">
    <property type="entry name" value="Adenine_deam"/>
</dbReference>
<dbReference type="InterPro" id="IPR026912">
    <property type="entry name" value="Adenine_deam_C"/>
</dbReference>
<dbReference type="InterPro" id="IPR006680">
    <property type="entry name" value="Amidohydro-rel"/>
</dbReference>
<dbReference type="InterPro" id="IPR011059">
    <property type="entry name" value="Metal-dep_hydrolase_composite"/>
</dbReference>
<dbReference type="InterPro" id="IPR032466">
    <property type="entry name" value="Metal_Hydrolase"/>
</dbReference>
<dbReference type="NCBIfam" id="TIGR01178">
    <property type="entry name" value="ade"/>
    <property type="match status" value="1"/>
</dbReference>
<dbReference type="PANTHER" id="PTHR11113:SF2">
    <property type="entry name" value="ADENINE DEAMINASE"/>
    <property type="match status" value="1"/>
</dbReference>
<dbReference type="PANTHER" id="PTHR11113">
    <property type="entry name" value="N-ACETYLGLUCOSAMINE-6-PHOSPHATE DEACETYLASE"/>
    <property type="match status" value="1"/>
</dbReference>
<dbReference type="Pfam" id="PF13382">
    <property type="entry name" value="Adenine_deam_C"/>
    <property type="match status" value="1"/>
</dbReference>
<dbReference type="Pfam" id="PF01979">
    <property type="entry name" value="Amidohydro_1"/>
    <property type="match status" value="1"/>
</dbReference>
<dbReference type="SUPFAM" id="SSF51338">
    <property type="entry name" value="Composite domain of metallo-dependent hydrolases"/>
    <property type="match status" value="1"/>
</dbReference>
<dbReference type="SUPFAM" id="SSF51556">
    <property type="entry name" value="Metallo-dependent hydrolases"/>
    <property type="match status" value="1"/>
</dbReference>
<reference key="1">
    <citation type="journal article" date="2006" name="Proc. Natl. Acad. Sci. U.S.A.">
        <title>Comparative genomics of the lactic acid bacteria.</title>
        <authorList>
            <person name="Makarova K.S."/>
            <person name="Slesarev A."/>
            <person name="Wolf Y.I."/>
            <person name="Sorokin A."/>
            <person name="Mirkin B."/>
            <person name="Koonin E.V."/>
            <person name="Pavlov A."/>
            <person name="Pavlova N."/>
            <person name="Karamychev V."/>
            <person name="Polouchine N."/>
            <person name="Shakhova V."/>
            <person name="Grigoriev I."/>
            <person name="Lou Y."/>
            <person name="Rohksar D."/>
            <person name="Lucas S."/>
            <person name="Huang K."/>
            <person name="Goodstein D.M."/>
            <person name="Hawkins T."/>
            <person name="Plengvidhya V."/>
            <person name="Welker D."/>
            <person name="Hughes J."/>
            <person name="Goh Y."/>
            <person name="Benson A."/>
            <person name="Baldwin K."/>
            <person name="Lee J.-H."/>
            <person name="Diaz-Muniz I."/>
            <person name="Dosti B."/>
            <person name="Smeianov V."/>
            <person name="Wechter W."/>
            <person name="Barabote R."/>
            <person name="Lorca G."/>
            <person name="Altermann E."/>
            <person name="Barrangou R."/>
            <person name="Ganesan B."/>
            <person name="Xie Y."/>
            <person name="Rawsthorne H."/>
            <person name="Tamir D."/>
            <person name="Parker C."/>
            <person name="Breidt F."/>
            <person name="Broadbent J.R."/>
            <person name="Hutkins R."/>
            <person name="O'Sullivan D."/>
            <person name="Steele J."/>
            <person name="Unlu G."/>
            <person name="Saier M.H. Jr."/>
            <person name="Klaenhammer T."/>
            <person name="Richardson P."/>
            <person name="Kozyavkin S."/>
            <person name="Weimer B.C."/>
            <person name="Mills D.A."/>
        </authorList>
    </citation>
    <scope>NUCLEOTIDE SEQUENCE [LARGE SCALE GENOMIC DNA]</scope>
    <source>
        <strain>ATCC 8293 / DSM 20343 / BCRC 11652 / CCM 1803 / JCM 6124 / NCDO 523 / NBRC 100496 / NCIMB 8023 / NCTC 12954 / NRRL B-1118 / 37Y</strain>
    </source>
</reference>
<evidence type="ECO:0000255" key="1">
    <source>
        <dbReference type="HAMAP-Rule" id="MF_01518"/>
    </source>
</evidence>
<comment type="catalytic activity">
    <reaction evidence="1">
        <text>adenine + H2O + H(+) = hypoxanthine + NH4(+)</text>
        <dbReference type="Rhea" id="RHEA:23688"/>
        <dbReference type="ChEBI" id="CHEBI:15377"/>
        <dbReference type="ChEBI" id="CHEBI:15378"/>
        <dbReference type="ChEBI" id="CHEBI:16708"/>
        <dbReference type="ChEBI" id="CHEBI:17368"/>
        <dbReference type="ChEBI" id="CHEBI:28938"/>
        <dbReference type="EC" id="3.5.4.2"/>
    </reaction>
</comment>
<comment type="cofactor">
    <cofactor evidence="1">
        <name>Mn(2+)</name>
        <dbReference type="ChEBI" id="CHEBI:29035"/>
    </cofactor>
</comment>
<comment type="similarity">
    <text evidence="1">Belongs to the metallo-dependent hydrolases superfamily. Adenine deaminase family.</text>
</comment>